<feature type="chain" id="PRO_0000284888" description="Dynein light chain Tctex-type 5-A">
    <location>
        <begin position="1"/>
        <end position="177"/>
    </location>
</feature>
<comment type="similarity">
    <text evidence="1">Belongs to the dynein light chain Tctex-type family.</text>
</comment>
<dbReference type="EMBL" id="BC106550">
    <property type="protein sequence ID" value="AAI06551.1"/>
    <property type="molecule type" value="mRNA"/>
</dbReference>
<dbReference type="RefSeq" id="NP_001090117.1">
    <property type="nucleotide sequence ID" value="NM_001096648.1"/>
</dbReference>
<dbReference type="RefSeq" id="XP_018112442.1">
    <property type="nucleotide sequence ID" value="XM_018256953.1"/>
</dbReference>
<dbReference type="RefSeq" id="XP_018112443.1">
    <property type="nucleotide sequence ID" value="XM_018256954.1"/>
</dbReference>
<dbReference type="RefSeq" id="XP_018112444.1">
    <property type="nucleotide sequence ID" value="XM_018256955.1"/>
</dbReference>
<dbReference type="SMR" id="Q3B8D7"/>
<dbReference type="DNASU" id="735195"/>
<dbReference type="GeneID" id="735195"/>
<dbReference type="KEGG" id="xla:735195"/>
<dbReference type="AGR" id="Xenbase:XB-GENE-6254257"/>
<dbReference type="CTD" id="735195"/>
<dbReference type="Xenbase" id="XB-GENE-6254257">
    <property type="gene designation" value="dynlt5.L"/>
</dbReference>
<dbReference type="OMA" id="FYSSSRC"/>
<dbReference type="OrthoDB" id="10248487at2759"/>
<dbReference type="Proteomes" id="UP000186698">
    <property type="component" value="Chromosome 4L"/>
</dbReference>
<dbReference type="Bgee" id="735195">
    <property type="expression patterns" value="Expressed in testis and 12 other cell types or tissues"/>
</dbReference>
<dbReference type="GO" id="GO:0005737">
    <property type="term" value="C:cytoplasm"/>
    <property type="evidence" value="ECO:0000318"/>
    <property type="project" value="GO_Central"/>
</dbReference>
<dbReference type="GO" id="GO:0005868">
    <property type="term" value="C:cytoplasmic dynein complex"/>
    <property type="evidence" value="ECO:0000318"/>
    <property type="project" value="GO_Central"/>
</dbReference>
<dbReference type="GO" id="GO:0045505">
    <property type="term" value="F:dynein intermediate chain binding"/>
    <property type="evidence" value="ECO:0000318"/>
    <property type="project" value="GO_Central"/>
</dbReference>
<dbReference type="GO" id="GO:0007018">
    <property type="term" value="P:microtubule-based movement"/>
    <property type="evidence" value="ECO:0000318"/>
    <property type="project" value="GO_Central"/>
</dbReference>
<dbReference type="CDD" id="cd21458">
    <property type="entry name" value="DLC-like_TCTEX1D1"/>
    <property type="match status" value="1"/>
</dbReference>
<dbReference type="Gene3D" id="3.30.1140.40">
    <property type="entry name" value="Tctex-1"/>
    <property type="match status" value="1"/>
</dbReference>
<dbReference type="InterPro" id="IPR005334">
    <property type="entry name" value="Tctex-1-like"/>
</dbReference>
<dbReference type="InterPro" id="IPR038586">
    <property type="entry name" value="Tctex-1-like_sf"/>
</dbReference>
<dbReference type="PANTHER" id="PTHR21255:SF64">
    <property type="entry name" value="DYNEIN LIGHT CHAIN TCTEX-TYPE 5"/>
    <property type="match status" value="1"/>
</dbReference>
<dbReference type="PANTHER" id="PTHR21255">
    <property type="entry name" value="T-COMPLEX-ASSOCIATED-TESTIS-EXPRESSED 1/ DYNEIN LIGHT CHAIN"/>
    <property type="match status" value="1"/>
</dbReference>
<dbReference type="Pfam" id="PF03645">
    <property type="entry name" value="Tctex-1"/>
    <property type="match status" value="1"/>
</dbReference>
<sequence length="177" mass="20008">MSDIAKDKAARLLKKRGSIISLGSHDVKPRGSFSKTKDSVSTVSYIDEPGHHDEIQSPAILMENTYQIGPAKRFPVASVNNILKDVLTSYLQEEKYEAELCRQMTKTISEVIKARVKDLMIPRYKIIVLIYIGQLNDQSMRVGSRCIWDPANDTFSSYSFKNSSLFALANVYGVYYE</sequence>
<reference key="1">
    <citation type="submission" date="2005-10" db="EMBL/GenBank/DDBJ databases">
        <authorList>
            <consortium name="NIH - Xenopus Gene Collection (XGC) project"/>
        </authorList>
    </citation>
    <scope>NUCLEOTIDE SEQUENCE [LARGE SCALE MRNA]</scope>
    <source>
        <tissue>Testis</tissue>
    </source>
</reference>
<accession>Q3B8D7</accession>
<gene>
    <name type="primary">Dynlt5-a</name>
    <name type="synonym">tctex1d1-a</name>
</gene>
<name>DYL5A_XENLA</name>
<protein>
    <recommendedName>
        <fullName>Dynein light chain Tctex-type 5-A</fullName>
    </recommendedName>
    <alternativeName>
        <fullName>Tctex1 domain-containing protein 1-A</fullName>
    </alternativeName>
</protein>
<keyword id="KW-1185">Reference proteome</keyword>
<evidence type="ECO:0000305" key="1"/>
<organism>
    <name type="scientific">Xenopus laevis</name>
    <name type="common">African clawed frog</name>
    <dbReference type="NCBI Taxonomy" id="8355"/>
    <lineage>
        <taxon>Eukaryota</taxon>
        <taxon>Metazoa</taxon>
        <taxon>Chordata</taxon>
        <taxon>Craniata</taxon>
        <taxon>Vertebrata</taxon>
        <taxon>Euteleostomi</taxon>
        <taxon>Amphibia</taxon>
        <taxon>Batrachia</taxon>
        <taxon>Anura</taxon>
        <taxon>Pipoidea</taxon>
        <taxon>Pipidae</taxon>
        <taxon>Xenopodinae</taxon>
        <taxon>Xenopus</taxon>
        <taxon>Xenopus</taxon>
    </lineage>
</organism>
<proteinExistence type="evidence at transcript level"/>